<sequence>MKFQHTFIALLSLLTYANAYDYFTTTLANQNPVCASVDVIQNVCTEVCGRFVRYIPDATNTNQFTFAEYTTNQCTVQVTPAVTNTFTCADQTSSHALGSDWSGVCKITATPAPTVTPTVTPTVTPTVTPTPTNTPNPTPSQTSTTTGSASTVVASLSLIIFSMILSLC</sequence>
<dbReference type="EMBL" id="M20909">
    <property type="protein sequence ID" value="AAA52100.1"/>
    <property type="molecule type" value="Genomic_DNA"/>
</dbReference>
<dbReference type="EMBL" id="X15980">
    <property type="protein sequence ID" value="CAA34102.1"/>
    <property type="molecule type" value="Genomic_DNA"/>
</dbReference>
<dbReference type="EMBL" id="AAFI02000003">
    <property type="protein sequence ID" value="EAL73158.1"/>
    <property type="molecule type" value="Genomic_DNA"/>
</dbReference>
<dbReference type="PIR" id="A54733">
    <property type="entry name" value="A31196"/>
</dbReference>
<dbReference type="RefSeq" id="XP_647406.1">
    <property type="nucleotide sequence ID" value="XM_642314.1"/>
</dbReference>
<dbReference type="BMRB" id="P12729"/>
<dbReference type="FunCoup" id="P12729">
    <property type="interactions" value="1"/>
</dbReference>
<dbReference type="STRING" id="44689.P12729"/>
<dbReference type="GlyCosmos" id="P12729">
    <property type="glycosylation" value="14 sites, No reported glycans"/>
</dbReference>
<dbReference type="GlyGen" id="P12729">
    <property type="glycosylation" value="15 sites"/>
</dbReference>
<dbReference type="PaxDb" id="44689-DDB0191129"/>
<dbReference type="EnsemblProtists" id="EAL73158">
    <property type="protein sequence ID" value="EAL73158"/>
    <property type="gene ID" value="DDB_G0267412"/>
</dbReference>
<dbReference type="GeneID" id="8616213"/>
<dbReference type="KEGG" id="ddi:DDB_G0267412"/>
<dbReference type="dictyBase" id="DDB_G0267412">
    <property type="gene designation" value="pspA"/>
</dbReference>
<dbReference type="VEuPathDB" id="AmoebaDB:DDB_G0267412"/>
<dbReference type="HOGENOM" id="CLU_1589455_0_0_1"/>
<dbReference type="InParanoid" id="P12729"/>
<dbReference type="OMA" id="YANAYDY"/>
<dbReference type="PhylomeDB" id="P12729"/>
<dbReference type="PRO" id="PR:P12729"/>
<dbReference type="Proteomes" id="UP000002195">
    <property type="component" value="Chromosome 1"/>
</dbReference>
<dbReference type="GO" id="GO:0097515">
    <property type="term" value="C:asexual spore wall"/>
    <property type="evidence" value="ECO:0000314"/>
    <property type="project" value="dictyBase"/>
</dbReference>
<dbReference type="GO" id="GO:0009986">
    <property type="term" value="C:cell surface"/>
    <property type="evidence" value="ECO:0000314"/>
    <property type="project" value="dictyBase"/>
</dbReference>
<dbReference type="GO" id="GO:0005576">
    <property type="term" value="C:extracellular region"/>
    <property type="evidence" value="ECO:0000314"/>
    <property type="project" value="dictyBase"/>
</dbReference>
<dbReference type="GO" id="GO:0005886">
    <property type="term" value="C:plasma membrane"/>
    <property type="evidence" value="ECO:0000314"/>
    <property type="project" value="dictyBase"/>
</dbReference>
<dbReference type="GO" id="GO:0098552">
    <property type="term" value="C:side of membrane"/>
    <property type="evidence" value="ECO:0007669"/>
    <property type="project" value="UniProtKB-KW"/>
</dbReference>
<dbReference type="GO" id="GO:0003779">
    <property type="term" value="F:actin binding"/>
    <property type="evidence" value="ECO:0007669"/>
    <property type="project" value="UniProtKB-KW"/>
</dbReference>
<dbReference type="GO" id="GO:0140582">
    <property type="term" value="P:adenylate cyclase-activating G protein-coupled cAMP receptor signaling pathway"/>
    <property type="evidence" value="ECO:0000314"/>
    <property type="project" value="dictyBase"/>
</dbReference>
<dbReference type="GO" id="GO:0098742">
    <property type="term" value="P:cell-cell adhesion via plasma-membrane adhesion molecules"/>
    <property type="evidence" value="ECO:0000314"/>
    <property type="project" value="dictyBase"/>
</dbReference>
<dbReference type="GO" id="GO:0006506">
    <property type="term" value="P:GPI anchor biosynthetic process"/>
    <property type="evidence" value="ECO:0000314"/>
    <property type="project" value="dictyBase"/>
</dbReference>
<dbReference type="GO" id="GO:0051999">
    <property type="term" value="P:mannosyl-inositol phosphorylceramide biosynthetic process"/>
    <property type="evidence" value="ECO:0000314"/>
    <property type="project" value="dictyBase"/>
</dbReference>
<dbReference type="GO" id="GO:0043937">
    <property type="term" value="P:regulation of sporulation"/>
    <property type="evidence" value="ECO:0000314"/>
    <property type="project" value="dictyBase"/>
</dbReference>
<dbReference type="GO" id="GO:1902168">
    <property type="term" value="P:response to catechin"/>
    <property type="evidence" value="ECO:0000314"/>
    <property type="project" value="dictyBase"/>
</dbReference>
<dbReference type="GO" id="GO:0031153">
    <property type="term" value="P:slug development involved in sorocarp development"/>
    <property type="evidence" value="ECO:0000270"/>
    <property type="project" value="dictyBase"/>
</dbReference>
<dbReference type="GO" id="GO:0099120">
    <property type="term" value="P:socially cooperative development"/>
    <property type="evidence" value="ECO:0000314"/>
    <property type="project" value="dictyBase"/>
</dbReference>
<name>PSA_DICDI</name>
<comment type="function">
    <text evidence="8">May bind F-actin and nucleates actin assembly.</text>
</comment>
<comment type="subcellular location">
    <subcellularLocation>
        <location>Cell membrane</location>
        <topology>Lipid-anchor</topology>
        <topology>GPI-anchor</topology>
    </subcellularLocation>
</comment>
<comment type="developmental stage">
    <text>Appears first in the multicellular stage soon after tip formation and is selectively expressed on prespore cells.</text>
</comment>
<comment type="PTM">
    <text evidence="5 6">O-glycosylated in the repeat region. The oligosaccharides contain N-acetylglucosamine and fucose as the major constituents.</text>
</comment>
<comment type="PTM">
    <text>The GPI-like-anchor contains a phosphoceramide group, rather than a phosphatidyl group.</text>
</comment>
<comment type="polymorphism">
    <text evidence="3">Allelic variation results in a protein with three, four or five tandem copies of Pro-Thr-Val-thr.</text>
</comment>
<comment type="similarity">
    <text evidence="7">Belongs to the ponticulin family.</text>
</comment>
<comment type="caution">
    <text evidence="7">The Dictyosteliida are known to produce a glycosylsphingolipidinositol anchor (GPI-like-anchor). It has not been established whether Dictyosteliida make a glycosylphosphatidylinositol anchor (GPI-anchor) also, and whether their GPI-like-anchor modifications can be interconverted with GPI-anchor modifications in a resculpting process. It has not been established that the GPI-like-anchor modification in Dictyosteliida utilizes the same sequence motif.</text>
</comment>
<accession>P12729</accession>
<accession>Q55FX7</accession>
<evidence type="ECO:0000255" key="1"/>
<evidence type="ECO:0000256" key="2">
    <source>
        <dbReference type="SAM" id="MobiDB-lite"/>
    </source>
</evidence>
<evidence type="ECO:0000269" key="3">
    <source>
    </source>
</evidence>
<evidence type="ECO:0000269" key="4">
    <source>
    </source>
</evidence>
<evidence type="ECO:0000269" key="5">
    <source>
    </source>
</evidence>
<evidence type="ECO:0000269" key="6">
    <source>
    </source>
</evidence>
<evidence type="ECO:0000305" key="7"/>
<evidence type="ECO:0000305" key="8">
    <source>
    </source>
</evidence>
<gene>
    <name type="primary">pspA</name>
    <name type="synonym">D19</name>
    <name type="synonym">ponG</name>
    <name type="synonym">psaA</name>
    <name type="ORF">DDB_G0267412</name>
</gene>
<keyword id="KW-0009">Actin-binding</keyword>
<keyword id="KW-1003">Cell membrane</keyword>
<keyword id="KW-0903">Direct protein sequencing</keyword>
<keyword id="KW-0325">Glycoprotein</keyword>
<keyword id="KW-0336">GPI-anchor</keyword>
<keyword id="KW-0449">Lipoprotein</keyword>
<keyword id="KW-0472">Membrane</keyword>
<keyword id="KW-1185">Reference proteome</keyword>
<keyword id="KW-0677">Repeat</keyword>
<keyword id="KW-0732">Signal</keyword>
<protein>
    <recommendedName>
        <fullName>Prespore-specific protein A</fullName>
    </recommendedName>
    <alternativeName>
        <fullName>Cell surface antigen PsA</fullName>
    </alternativeName>
    <alternativeName>
        <fullName>Ponticulin-like protein G</fullName>
    </alternativeName>
    <alternativeName>
        <fullName>Protein D19</fullName>
    </alternativeName>
</protein>
<feature type="signal peptide" evidence="4">
    <location>
        <begin position="1"/>
        <end position="19"/>
    </location>
</feature>
<feature type="chain" id="PRO_0000022164" description="Prespore-specific protein A">
    <location>
        <begin position="20"/>
        <end position="147"/>
    </location>
</feature>
<feature type="propeptide" id="PRO_0000022165" description="Removed in mature form" evidence="1">
    <location>
        <begin position="148"/>
        <end position="168"/>
    </location>
</feature>
<feature type="repeat" description="1">
    <location>
        <begin position="116"/>
        <end position="119"/>
    </location>
</feature>
<feature type="repeat" description="2">
    <location>
        <begin position="120"/>
        <end position="123"/>
    </location>
</feature>
<feature type="repeat" description="3">
    <location>
        <begin position="124"/>
        <end position="127"/>
    </location>
</feature>
<feature type="region of interest" description="Disordered" evidence="2">
    <location>
        <begin position="116"/>
        <end position="147"/>
    </location>
</feature>
<feature type="region of interest" description="3 X 4 AA tandem repeats of T-P-T-V">
    <location>
        <begin position="116"/>
        <end position="127"/>
    </location>
</feature>
<feature type="compositionally biased region" description="Low complexity" evidence="2">
    <location>
        <begin position="116"/>
        <end position="131"/>
    </location>
</feature>
<feature type="lipid moiety-binding region" description="GPI-like-anchor amidated glycine" evidence="1">
    <location>
        <position position="147"/>
    </location>
</feature>
<feature type="glycosylation site" description="O-linked (GlcNAc) threonine">
    <location>
        <position position="110"/>
    </location>
</feature>
<feature type="glycosylation site" description="O-linked (GlcNAc) threonine">
    <location>
        <position position="114"/>
    </location>
</feature>
<feature type="glycosylation site" description="O-linked (GlcNAc) threonine">
    <location>
        <position position="116"/>
    </location>
</feature>
<feature type="glycosylation site" description="O-linked (GlcNAc) threonine">
    <location>
        <position position="118"/>
    </location>
</feature>
<feature type="glycosylation site" description="O-linked (GlcNAc) threonine">
    <location>
        <position position="120"/>
    </location>
</feature>
<feature type="glycosylation site" description="O-linked (GlcNAc) threonine">
    <location>
        <position position="122"/>
    </location>
</feature>
<feature type="glycosylation site" description="O-linked (GlcNAc) threonine">
    <location>
        <position position="124"/>
    </location>
</feature>
<feature type="glycosylation site" description="O-linked (GlcNAc) threonine">
    <location>
        <position position="126"/>
    </location>
</feature>
<feature type="glycosylation site" description="O-linked (GlcNAc) threonine">
    <location>
        <position position="128"/>
    </location>
</feature>
<feature type="glycosylation site" description="O-linked (GlcNAc) threonine">
    <location>
        <position position="130"/>
    </location>
</feature>
<feature type="glycosylation site" description="O-linked (GlcNAc) threonine">
    <location>
        <position position="132"/>
    </location>
</feature>
<feature type="glycosylation site" description="O-linked (GlcNAc) threonine">
    <location>
        <position position="134"/>
    </location>
</feature>
<feature type="glycosylation site" description="O-linked (GlcNAc) threonine">
    <location>
        <position position="138"/>
    </location>
</feature>
<feature type="glycosylation site" description="O-linked (GlcNAc) serine">
    <location>
        <position position="140"/>
    </location>
</feature>
<reference key="1">
    <citation type="journal article" date="1988" name="Mol. Cell. Biol.">
        <title>Structural characterization of Dictyostelium discoideum prespore-specific gene D19 and of its product, cell surface glycoprotein PsA.</title>
        <authorList>
            <person name="Early A.E."/>
            <person name="Williams J.G."/>
            <person name="Meyer H.E."/>
            <person name="Por S.B."/>
            <person name="Smith E."/>
            <person name="Williams K.L."/>
            <person name="Gooley A.A."/>
        </authorList>
    </citation>
    <scope>NUCLEOTIDE SEQUENCE [GENOMIC DNA]</scope>
    <scope>PROTEIN SEQUENCE OF 20-100</scope>
    <source>
        <strain>AX2</strain>
    </source>
</reference>
<reference key="2">
    <citation type="journal article" date="1989" name="Nucleic Acids Res.">
        <title>Identification of sequences regulating the transcription of a Dictyostelium gene selectively expressed in prespore cells.</title>
        <authorList>
            <person name="Early A.E."/>
            <person name="Williams J.G."/>
        </authorList>
    </citation>
    <scope>NUCLEOTIDE SEQUENCE [GENOMIC DNA]</scope>
    <source>
        <strain>AX2</strain>
    </source>
</reference>
<reference key="3">
    <citation type="journal article" date="1988" name="Dev. Genet.">
        <title>Structural and functional characterization of genes encoding Dictyostelium prestalk and prespore cell-specific proteins.</title>
        <authorList>
            <person name="Early A.E."/>
            <person name="McRobbie S.J."/>
            <person name="Duffy K.T."/>
            <person name="Jermyn K.A."/>
            <person name="Tilly R."/>
            <person name="Ceccarelli A."/>
            <person name="Williams J.G."/>
        </authorList>
    </citation>
    <scope>NUCLEOTIDE SEQUENCE [GENOMIC DNA]</scope>
    <source>
        <strain>AX2</strain>
    </source>
</reference>
<reference key="4">
    <citation type="journal article" date="2005" name="Nature">
        <title>The genome of the social amoeba Dictyostelium discoideum.</title>
        <authorList>
            <person name="Eichinger L."/>
            <person name="Pachebat J.A."/>
            <person name="Gloeckner G."/>
            <person name="Rajandream M.A."/>
            <person name="Sucgang R."/>
            <person name="Berriman M."/>
            <person name="Song J."/>
            <person name="Olsen R."/>
            <person name="Szafranski K."/>
            <person name="Xu Q."/>
            <person name="Tunggal B."/>
            <person name="Kummerfeld S."/>
            <person name="Madera M."/>
            <person name="Konfortov B.A."/>
            <person name="Rivero F."/>
            <person name="Bankier A.T."/>
            <person name="Lehmann R."/>
            <person name="Hamlin N."/>
            <person name="Davies R."/>
            <person name="Gaudet P."/>
            <person name="Fey P."/>
            <person name="Pilcher K."/>
            <person name="Chen G."/>
            <person name="Saunders D."/>
            <person name="Sodergren E.J."/>
            <person name="Davis P."/>
            <person name="Kerhornou A."/>
            <person name="Nie X."/>
            <person name="Hall N."/>
            <person name="Anjard C."/>
            <person name="Hemphill L."/>
            <person name="Bason N."/>
            <person name="Farbrother P."/>
            <person name="Desany B."/>
            <person name="Just E."/>
            <person name="Morio T."/>
            <person name="Rost R."/>
            <person name="Churcher C.M."/>
            <person name="Cooper J."/>
            <person name="Haydock S."/>
            <person name="van Driessche N."/>
            <person name="Cronin A."/>
            <person name="Goodhead I."/>
            <person name="Muzny D.M."/>
            <person name="Mourier T."/>
            <person name="Pain A."/>
            <person name="Lu M."/>
            <person name="Harper D."/>
            <person name="Lindsay R."/>
            <person name="Hauser H."/>
            <person name="James K.D."/>
            <person name="Quiles M."/>
            <person name="Madan Babu M."/>
            <person name="Saito T."/>
            <person name="Buchrieser C."/>
            <person name="Wardroper A."/>
            <person name="Felder M."/>
            <person name="Thangavelu M."/>
            <person name="Johnson D."/>
            <person name="Knights A."/>
            <person name="Loulseged H."/>
            <person name="Mungall K.L."/>
            <person name="Oliver K."/>
            <person name="Price C."/>
            <person name="Quail M.A."/>
            <person name="Urushihara H."/>
            <person name="Hernandez J."/>
            <person name="Rabbinowitsch E."/>
            <person name="Steffen D."/>
            <person name="Sanders M."/>
            <person name="Ma J."/>
            <person name="Kohara Y."/>
            <person name="Sharp S."/>
            <person name="Simmonds M.N."/>
            <person name="Spiegler S."/>
            <person name="Tivey A."/>
            <person name="Sugano S."/>
            <person name="White B."/>
            <person name="Walker D."/>
            <person name="Woodward J.R."/>
            <person name="Winckler T."/>
            <person name="Tanaka Y."/>
            <person name="Shaulsky G."/>
            <person name="Schleicher M."/>
            <person name="Weinstock G.M."/>
            <person name="Rosenthal A."/>
            <person name="Cox E.C."/>
            <person name="Chisholm R.L."/>
            <person name="Gibbs R.A."/>
            <person name="Loomis W.F."/>
            <person name="Platzer M."/>
            <person name="Kay R.R."/>
            <person name="Williams J.G."/>
            <person name="Dear P.H."/>
            <person name="Noegel A.A."/>
            <person name="Barrell B.G."/>
            <person name="Kuspa A."/>
        </authorList>
    </citation>
    <scope>NUCLEOTIDE SEQUENCE [LARGE SCALE GENOMIC DNA]</scope>
    <source>
        <strain>AX4</strain>
    </source>
</reference>
<reference key="5">
    <citation type="journal article" date="1996" name="Eur. J. Biochem.">
        <title>Recombinant prespore-specific antigen from Dictyostelium discoideum is a beta-sheet glycoprotein with a spacer peptide modified by O-linked N-acetylglucosamine.</title>
        <authorList>
            <person name="Zachara N.E."/>
            <person name="Packer N.H."/>
            <person name="Temple M.D."/>
            <person name="Slade M.B."/>
            <person name="Jardine D.R."/>
            <person name="Karuso P."/>
            <person name="Moss C.J."/>
            <person name="Mabbutt B.C."/>
            <person name="Curmi P.M.G."/>
            <person name="Williams K.L."/>
            <person name="Gooley A.A."/>
        </authorList>
    </citation>
    <scope>PARTIAL PROTEIN SEQUENCE</scope>
    <scope>GLYCOSYLATION</scope>
</reference>
<reference key="6">
    <citation type="journal article" date="1992" name="Genetics">
        <title>Size polymorphisms due to changes in the number of O-glycosylated tandem repeats in the Dictyostelium discoideum glycoprotein PsA.</title>
        <authorList>
            <person name="Gooley A.A."/>
            <person name="Marshchalek R."/>
            <person name="Williams K.L."/>
        </authorList>
    </citation>
    <scope>POLYMORPHISM</scope>
</reference>
<reference key="7">
    <citation type="journal article" date="1993" name="Eur. J. Biochem.">
        <title>Post-translational modifications of the Dictyostelium discoideum glycoprotein PsA. Glycosylphosphatidylinositol membrane anchor and composition of O-linked oligosaccharides.</title>
        <authorList>
            <person name="Haynes P.A."/>
            <person name="Gooley A.A."/>
            <person name="Ferguson M.A."/>
            <person name="Redmond J.W."/>
            <person name="Williams K.L."/>
        </authorList>
    </citation>
    <scope>GPI-ANCHOR</scope>
    <scope>GLYCOSYLATION</scope>
</reference>
<reference key="8">
    <citation type="journal article" date="2008" name="Langmuir">
        <title>Minimal F-actin cytoskeletal system for planar supported phospholipid bilayers.</title>
        <authorList>
            <person name="Barfoot R.J."/>
            <person name="Sheikh K.H."/>
            <person name="Johnson B.R."/>
            <person name="Colyer J."/>
            <person name="Miles R.E."/>
            <person name="Jeuken L.J."/>
            <person name="Bushby R.J."/>
            <person name="Evans S.D."/>
        </authorList>
    </citation>
    <scope>FUNCTION</scope>
</reference>
<proteinExistence type="evidence at protein level"/>
<organism>
    <name type="scientific">Dictyostelium discoideum</name>
    <name type="common">Social amoeba</name>
    <dbReference type="NCBI Taxonomy" id="44689"/>
    <lineage>
        <taxon>Eukaryota</taxon>
        <taxon>Amoebozoa</taxon>
        <taxon>Evosea</taxon>
        <taxon>Eumycetozoa</taxon>
        <taxon>Dictyostelia</taxon>
        <taxon>Dictyosteliales</taxon>
        <taxon>Dictyosteliaceae</taxon>
        <taxon>Dictyostelium</taxon>
    </lineage>
</organism>